<protein>
    <recommendedName>
        <fullName evidence="1">Na(+)-translocating NADH-quinone reductase subunit A</fullName>
        <shortName evidence="1">Na(+)-NQR subunit A</shortName>
        <shortName evidence="1">Na(+)-translocating NQR subunit A</shortName>
        <ecNumber evidence="1">7.2.1.1</ecNumber>
    </recommendedName>
    <alternativeName>
        <fullName evidence="1">NQR complex subunit A</fullName>
    </alternativeName>
    <alternativeName>
        <fullName evidence="1">NQR-1 subunit A</fullName>
    </alternativeName>
</protein>
<accession>Q3KL61</accession>
<keyword id="KW-0406">Ion transport</keyword>
<keyword id="KW-0520">NAD</keyword>
<keyword id="KW-0915">Sodium</keyword>
<keyword id="KW-0739">Sodium transport</keyword>
<keyword id="KW-1278">Translocase</keyword>
<keyword id="KW-0813">Transport</keyword>
<keyword id="KW-0830">Ubiquinone</keyword>
<comment type="function">
    <text evidence="1">NQR complex catalyzes the reduction of ubiquinone-1 to ubiquinol by two successive reactions, coupled with the transport of Na(+) ions from the cytoplasm to the periplasm. NqrA to NqrE are probably involved in the second step, the conversion of ubisemiquinone to ubiquinol.</text>
</comment>
<comment type="catalytic activity">
    <reaction evidence="1">
        <text>a ubiquinone + n Na(+)(in) + NADH + H(+) = a ubiquinol + n Na(+)(out) + NAD(+)</text>
        <dbReference type="Rhea" id="RHEA:47748"/>
        <dbReference type="Rhea" id="RHEA-COMP:9565"/>
        <dbReference type="Rhea" id="RHEA-COMP:9566"/>
        <dbReference type="ChEBI" id="CHEBI:15378"/>
        <dbReference type="ChEBI" id="CHEBI:16389"/>
        <dbReference type="ChEBI" id="CHEBI:17976"/>
        <dbReference type="ChEBI" id="CHEBI:29101"/>
        <dbReference type="ChEBI" id="CHEBI:57540"/>
        <dbReference type="ChEBI" id="CHEBI:57945"/>
        <dbReference type="EC" id="7.2.1.1"/>
    </reaction>
</comment>
<comment type="subunit">
    <text evidence="1">Composed of six subunits; NqrA, NqrB, NqrC, NqrD, NqrE and NqrF.</text>
</comment>
<comment type="similarity">
    <text evidence="1">Belongs to the NqrA family.</text>
</comment>
<sequence>MKIVVSRGLDLSLKGAPKESGFCGKVDPTYVSVDLRPFAPLPLGVKVTPEDQVTAGSPLAEYKLFSGVFITSPVDGEVVEIRRGNKRALLEIVIKKKPGISQTKFSYDLQSLTQKDLLEVFKKEGLFALFKQRPFDIPALPTQSPRDVFINLADNRPFTPSVEKHLSLFSSKEDGYYIFVVGVQAIAKLFGLKPHIISTDRLTLPTQDLVSIAHLHTIDGPFPSGSPSTHIHHIARIRNERDVVFTISFQEVLSIGHLFLKGFVLGQQIVALAGSALPPSQRKYLITAKGASFSDLLPKDIFSSDEITLISGDPLTGRLCKKEENPCLGMRDHTITLLPNPKTRESFSFLRLGWNKLTVTRTYLSGFFKRKRVFMDMDTNMHGEKRPIIDAEIYERVSAIPVPVALIIKALETQNFEEACRLGLLEVAPEDFALPTFIDPSKTEMFSIVKESLLRYAKENVVTSS</sequence>
<proteinExistence type="inferred from homology"/>
<evidence type="ECO:0000255" key="1">
    <source>
        <dbReference type="HAMAP-Rule" id="MF_00425"/>
    </source>
</evidence>
<organism>
    <name type="scientific">Chlamydia trachomatis serovar A (strain ATCC VR-571B / DSM 19440 / HAR-13)</name>
    <dbReference type="NCBI Taxonomy" id="315277"/>
    <lineage>
        <taxon>Bacteria</taxon>
        <taxon>Pseudomonadati</taxon>
        <taxon>Chlamydiota</taxon>
        <taxon>Chlamydiia</taxon>
        <taxon>Chlamydiales</taxon>
        <taxon>Chlamydiaceae</taxon>
        <taxon>Chlamydia/Chlamydophila group</taxon>
        <taxon>Chlamydia</taxon>
    </lineage>
</organism>
<gene>
    <name evidence="1" type="primary">nqrA</name>
    <name type="ordered locus">CTA_0688</name>
</gene>
<feature type="chain" id="PRO_1000060111" description="Na(+)-translocating NADH-quinone reductase subunit A">
    <location>
        <begin position="1"/>
        <end position="465"/>
    </location>
</feature>
<name>NQRA_CHLTA</name>
<reference key="1">
    <citation type="journal article" date="2005" name="Infect. Immun.">
        <title>Comparative genomic analysis of Chlamydia trachomatis oculotropic and genitotropic strains.</title>
        <authorList>
            <person name="Carlson J.H."/>
            <person name="Porcella S.F."/>
            <person name="McClarty G."/>
            <person name="Caldwell H.D."/>
        </authorList>
    </citation>
    <scope>NUCLEOTIDE SEQUENCE [LARGE SCALE GENOMIC DNA]</scope>
    <source>
        <strain>ATCC VR-571B / DSM 19440 / HAR-13</strain>
    </source>
</reference>
<dbReference type="EC" id="7.2.1.1" evidence="1"/>
<dbReference type="EMBL" id="CP000051">
    <property type="protein sequence ID" value="AAX50911.1"/>
    <property type="molecule type" value="Genomic_DNA"/>
</dbReference>
<dbReference type="RefSeq" id="WP_009872806.1">
    <property type="nucleotide sequence ID" value="NC_007429.1"/>
</dbReference>
<dbReference type="SMR" id="Q3KL61"/>
<dbReference type="KEGG" id="cta:CTA_0688"/>
<dbReference type="HOGENOM" id="CLU_046656_0_0_0"/>
<dbReference type="Proteomes" id="UP000002532">
    <property type="component" value="Chromosome"/>
</dbReference>
<dbReference type="GO" id="GO:0016655">
    <property type="term" value="F:oxidoreductase activity, acting on NAD(P)H, quinone or similar compound as acceptor"/>
    <property type="evidence" value="ECO:0007669"/>
    <property type="project" value="UniProtKB-UniRule"/>
</dbReference>
<dbReference type="GO" id="GO:0006814">
    <property type="term" value="P:sodium ion transport"/>
    <property type="evidence" value="ECO:0007669"/>
    <property type="project" value="UniProtKB-UniRule"/>
</dbReference>
<dbReference type="HAMAP" id="MF_00425">
    <property type="entry name" value="NqrA"/>
    <property type="match status" value="1"/>
</dbReference>
<dbReference type="InterPro" id="IPR008703">
    <property type="entry name" value="NqrA"/>
</dbReference>
<dbReference type="InterPro" id="IPR056148">
    <property type="entry name" value="NQRA_2nd"/>
</dbReference>
<dbReference type="InterPro" id="IPR022615">
    <property type="entry name" value="NqrA_C_domain"/>
</dbReference>
<dbReference type="InterPro" id="IPR056147">
    <property type="entry name" value="NQRA_N"/>
</dbReference>
<dbReference type="NCBIfam" id="TIGR01936">
    <property type="entry name" value="nqrA"/>
    <property type="match status" value="1"/>
</dbReference>
<dbReference type="NCBIfam" id="NF003758">
    <property type="entry name" value="PRK05352.1-1"/>
    <property type="match status" value="1"/>
</dbReference>
<dbReference type="PANTHER" id="PTHR37839">
    <property type="entry name" value="NA(+)-TRANSLOCATING NADH-QUINONE REDUCTASE SUBUNIT A"/>
    <property type="match status" value="1"/>
</dbReference>
<dbReference type="PANTHER" id="PTHR37839:SF1">
    <property type="entry name" value="NA(+)-TRANSLOCATING NADH-QUINONE REDUCTASE SUBUNIT A"/>
    <property type="match status" value="1"/>
</dbReference>
<dbReference type="Pfam" id="PF24836">
    <property type="entry name" value="NQRA_2nd"/>
    <property type="match status" value="1"/>
</dbReference>
<dbReference type="Pfam" id="PF05896">
    <property type="entry name" value="NQRA_N"/>
    <property type="match status" value="1"/>
</dbReference>
<dbReference type="Pfam" id="PF11973">
    <property type="entry name" value="NQRA_SLBB"/>
    <property type="match status" value="1"/>
</dbReference>